<proteinExistence type="inferred from homology"/>
<protein>
    <recommendedName>
        <fullName evidence="1">Integration host factor subunit alpha</fullName>
        <shortName evidence="1">IHF-alpha</shortName>
    </recommendedName>
</protein>
<name>IHFA_ALIFM</name>
<gene>
    <name evidence="1" type="primary">ihfA</name>
    <name evidence="1" type="synonym">himA</name>
    <name type="ordered locus">VFMJ11_1320</name>
</gene>
<accession>B5FDX6</accession>
<comment type="function">
    <text evidence="1">This protein is one of the two subunits of integration host factor, a specific DNA-binding protein that functions in genetic recombination as well as in transcriptional and translational control.</text>
</comment>
<comment type="subunit">
    <text evidence="1">Heterodimer of an alpha and a beta chain.</text>
</comment>
<comment type="similarity">
    <text evidence="1">Belongs to the bacterial histone-like protein family.</text>
</comment>
<sequence>MALTKADLAETLFEKVGLSKRDAKETVEVFFEEIKQALESGEQVKLSGFGNFDLREKSERPGRNPKTGEDIPISARRVVTFKPGQKLKARVENLPVEK</sequence>
<reference key="1">
    <citation type="submission" date="2008-08" db="EMBL/GenBank/DDBJ databases">
        <title>Complete sequence of Vibrio fischeri strain MJ11.</title>
        <authorList>
            <person name="Mandel M.J."/>
            <person name="Stabb E.V."/>
            <person name="Ruby E.G."/>
            <person name="Ferriera S."/>
            <person name="Johnson J."/>
            <person name="Kravitz S."/>
            <person name="Beeson K."/>
            <person name="Sutton G."/>
            <person name="Rogers Y.-H."/>
            <person name="Friedman R."/>
            <person name="Frazier M."/>
            <person name="Venter J.C."/>
        </authorList>
    </citation>
    <scope>NUCLEOTIDE SEQUENCE [LARGE SCALE GENOMIC DNA]</scope>
    <source>
        <strain>MJ11</strain>
    </source>
</reference>
<organism>
    <name type="scientific">Aliivibrio fischeri (strain MJ11)</name>
    <name type="common">Vibrio fischeri</name>
    <dbReference type="NCBI Taxonomy" id="388396"/>
    <lineage>
        <taxon>Bacteria</taxon>
        <taxon>Pseudomonadati</taxon>
        <taxon>Pseudomonadota</taxon>
        <taxon>Gammaproteobacteria</taxon>
        <taxon>Vibrionales</taxon>
        <taxon>Vibrionaceae</taxon>
        <taxon>Aliivibrio</taxon>
    </lineage>
</organism>
<keyword id="KW-0233">DNA recombination</keyword>
<keyword id="KW-0238">DNA-binding</keyword>
<keyword id="KW-0804">Transcription</keyword>
<keyword id="KW-0805">Transcription regulation</keyword>
<keyword id="KW-0810">Translation regulation</keyword>
<evidence type="ECO:0000255" key="1">
    <source>
        <dbReference type="HAMAP-Rule" id="MF_00380"/>
    </source>
</evidence>
<evidence type="ECO:0000256" key="2">
    <source>
        <dbReference type="SAM" id="MobiDB-lite"/>
    </source>
</evidence>
<feature type="chain" id="PRO_1000122172" description="Integration host factor subunit alpha">
    <location>
        <begin position="1"/>
        <end position="98"/>
    </location>
</feature>
<feature type="region of interest" description="Disordered" evidence="2">
    <location>
        <begin position="53"/>
        <end position="73"/>
    </location>
</feature>
<feature type="compositionally biased region" description="Basic and acidic residues" evidence="2">
    <location>
        <begin position="53"/>
        <end position="69"/>
    </location>
</feature>
<dbReference type="EMBL" id="CP001139">
    <property type="protein sequence ID" value="ACH67102.1"/>
    <property type="molecule type" value="Genomic_DNA"/>
</dbReference>
<dbReference type="RefSeq" id="WP_005419121.1">
    <property type="nucleotide sequence ID" value="NC_011184.1"/>
</dbReference>
<dbReference type="SMR" id="B5FDX6"/>
<dbReference type="GeneID" id="56276981"/>
<dbReference type="KEGG" id="vfm:VFMJ11_1320"/>
<dbReference type="HOGENOM" id="CLU_105066_1_3_6"/>
<dbReference type="Proteomes" id="UP000001857">
    <property type="component" value="Chromosome I"/>
</dbReference>
<dbReference type="GO" id="GO:0005829">
    <property type="term" value="C:cytosol"/>
    <property type="evidence" value="ECO:0007669"/>
    <property type="project" value="TreeGrafter"/>
</dbReference>
<dbReference type="GO" id="GO:0003677">
    <property type="term" value="F:DNA binding"/>
    <property type="evidence" value="ECO:0007669"/>
    <property type="project" value="UniProtKB-UniRule"/>
</dbReference>
<dbReference type="GO" id="GO:0030527">
    <property type="term" value="F:structural constituent of chromatin"/>
    <property type="evidence" value="ECO:0007669"/>
    <property type="project" value="InterPro"/>
</dbReference>
<dbReference type="GO" id="GO:0006310">
    <property type="term" value="P:DNA recombination"/>
    <property type="evidence" value="ECO:0007669"/>
    <property type="project" value="UniProtKB-UniRule"/>
</dbReference>
<dbReference type="GO" id="GO:0009893">
    <property type="term" value="P:positive regulation of metabolic process"/>
    <property type="evidence" value="ECO:0007669"/>
    <property type="project" value="UniProtKB-ARBA"/>
</dbReference>
<dbReference type="GO" id="GO:0006355">
    <property type="term" value="P:regulation of DNA-templated transcription"/>
    <property type="evidence" value="ECO:0007669"/>
    <property type="project" value="UniProtKB-UniRule"/>
</dbReference>
<dbReference type="GO" id="GO:0006417">
    <property type="term" value="P:regulation of translation"/>
    <property type="evidence" value="ECO:0007669"/>
    <property type="project" value="UniProtKB-UniRule"/>
</dbReference>
<dbReference type="CDD" id="cd13835">
    <property type="entry name" value="IHF_A"/>
    <property type="match status" value="1"/>
</dbReference>
<dbReference type="FunFam" id="4.10.520.10:FF:000002">
    <property type="entry name" value="Integration host factor subunit alpha"/>
    <property type="match status" value="1"/>
</dbReference>
<dbReference type="Gene3D" id="4.10.520.10">
    <property type="entry name" value="IHF-like DNA-binding proteins"/>
    <property type="match status" value="1"/>
</dbReference>
<dbReference type="HAMAP" id="MF_00380">
    <property type="entry name" value="IHF_alpha"/>
    <property type="match status" value="1"/>
</dbReference>
<dbReference type="InterPro" id="IPR000119">
    <property type="entry name" value="Hist_DNA-bd"/>
</dbReference>
<dbReference type="InterPro" id="IPR020816">
    <property type="entry name" value="Histone-like_DNA-bd_CS"/>
</dbReference>
<dbReference type="InterPro" id="IPR010992">
    <property type="entry name" value="IHF-like_DNA-bd_dom_sf"/>
</dbReference>
<dbReference type="InterPro" id="IPR005684">
    <property type="entry name" value="IHF_alpha"/>
</dbReference>
<dbReference type="NCBIfam" id="TIGR00987">
    <property type="entry name" value="himA"/>
    <property type="match status" value="1"/>
</dbReference>
<dbReference type="NCBIfam" id="NF001401">
    <property type="entry name" value="PRK00285.1"/>
    <property type="match status" value="1"/>
</dbReference>
<dbReference type="PANTHER" id="PTHR33175">
    <property type="entry name" value="DNA-BINDING PROTEIN HU"/>
    <property type="match status" value="1"/>
</dbReference>
<dbReference type="PANTHER" id="PTHR33175:SF2">
    <property type="entry name" value="INTEGRATION HOST FACTOR SUBUNIT ALPHA"/>
    <property type="match status" value="1"/>
</dbReference>
<dbReference type="Pfam" id="PF00216">
    <property type="entry name" value="Bac_DNA_binding"/>
    <property type="match status" value="1"/>
</dbReference>
<dbReference type="PRINTS" id="PR01727">
    <property type="entry name" value="DNABINDINGHU"/>
</dbReference>
<dbReference type="SMART" id="SM00411">
    <property type="entry name" value="BHL"/>
    <property type="match status" value="1"/>
</dbReference>
<dbReference type="SUPFAM" id="SSF47729">
    <property type="entry name" value="IHF-like DNA-binding proteins"/>
    <property type="match status" value="1"/>
</dbReference>
<dbReference type="PROSITE" id="PS00045">
    <property type="entry name" value="HISTONE_LIKE"/>
    <property type="match status" value="1"/>
</dbReference>